<feature type="chain" id="PRO_1000002913" description="UDP-N-acetylenolpyruvoylglucosamine reductase">
    <location>
        <begin position="1"/>
        <end position="307"/>
    </location>
</feature>
<feature type="domain" description="FAD-binding PCMH-type" evidence="1">
    <location>
        <begin position="33"/>
        <end position="197"/>
    </location>
</feature>
<feature type="active site" evidence="1">
    <location>
        <position position="176"/>
    </location>
</feature>
<feature type="active site" description="Proton donor" evidence="1">
    <location>
        <position position="226"/>
    </location>
</feature>
<feature type="active site" evidence="1">
    <location>
        <position position="296"/>
    </location>
</feature>
<name>MURB_STAA1</name>
<reference key="1">
    <citation type="journal article" date="2008" name="Antimicrob. Agents Chemother.">
        <title>Mutated response regulator graR is responsible for phenotypic conversion of Staphylococcus aureus from heterogeneous vancomycin-intermediate resistance to vancomycin-intermediate resistance.</title>
        <authorList>
            <person name="Neoh H.-M."/>
            <person name="Cui L."/>
            <person name="Yuzawa H."/>
            <person name="Takeuchi F."/>
            <person name="Matsuo M."/>
            <person name="Hiramatsu K."/>
        </authorList>
    </citation>
    <scope>NUCLEOTIDE SEQUENCE [LARGE SCALE GENOMIC DNA]</scope>
    <source>
        <strain>Mu3 / ATCC 700698</strain>
    </source>
</reference>
<protein>
    <recommendedName>
        <fullName evidence="1">UDP-N-acetylenolpyruvoylglucosamine reductase</fullName>
        <ecNumber evidence="1">1.3.1.98</ecNumber>
    </recommendedName>
    <alternativeName>
        <fullName evidence="1">UDP-N-acetylmuramate dehydrogenase</fullName>
    </alternativeName>
</protein>
<accession>A7WZM9</accession>
<keyword id="KW-0131">Cell cycle</keyword>
<keyword id="KW-0132">Cell division</keyword>
<keyword id="KW-0133">Cell shape</keyword>
<keyword id="KW-0961">Cell wall biogenesis/degradation</keyword>
<keyword id="KW-0963">Cytoplasm</keyword>
<keyword id="KW-0274">FAD</keyword>
<keyword id="KW-0285">Flavoprotein</keyword>
<keyword id="KW-0521">NADP</keyword>
<keyword id="KW-0560">Oxidoreductase</keyword>
<keyword id="KW-0573">Peptidoglycan synthesis</keyword>
<organism>
    <name type="scientific">Staphylococcus aureus (strain Mu3 / ATCC 700698)</name>
    <dbReference type="NCBI Taxonomy" id="418127"/>
    <lineage>
        <taxon>Bacteria</taxon>
        <taxon>Bacillati</taxon>
        <taxon>Bacillota</taxon>
        <taxon>Bacilli</taxon>
        <taxon>Bacillales</taxon>
        <taxon>Staphylococcaceae</taxon>
        <taxon>Staphylococcus</taxon>
    </lineage>
</organism>
<sequence length="307" mass="33783">MINKDIYQALQQLIPNEKIKVDEPLKRYTYTKTGGNADFYITPTKNEEVQAVVKYAYQNEIPVTYLGNGSNIIIREGGIRGIVISLLSLDHIDVSDDAIIAGSGAAIIDVSRVARDYALTGLEFACGIPGSIGGAVYMNAGAYGGEVKDCIDYALCVNEQGSLIKLTTKELELDYRNSIIQKEHLVVLEAAFTLAPGKMTEIQAKMDDLTERRESKQPLEYPSCGSVFQRPPGHFAGKLIQDSNLQGHRIGGVEVSTKHAGFMVNVDNGTATDYENLIHYVQKTVKEKFGIELNREVRIIGEHPKES</sequence>
<evidence type="ECO:0000255" key="1">
    <source>
        <dbReference type="HAMAP-Rule" id="MF_00037"/>
    </source>
</evidence>
<dbReference type="EC" id="1.3.1.98" evidence="1"/>
<dbReference type="EMBL" id="AP009324">
    <property type="protein sequence ID" value="BAF77618.1"/>
    <property type="molecule type" value="Genomic_DNA"/>
</dbReference>
<dbReference type="RefSeq" id="WP_000608433.1">
    <property type="nucleotide sequence ID" value="NC_009782.1"/>
</dbReference>
<dbReference type="SMR" id="A7WZM9"/>
<dbReference type="KEGG" id="saw:SAHV_0735"/>
<dbReference type="HOGENOM" id="CLU_035304_1_1_9"/>
<dbReference type="UniPathway" id="UPA00219"/>
<dbReference type="GO" id="GO:0005829">
    <property type="term" value="C:cytosol"/>
    <property type="evidence" value="ECO:0007669"/>
    <property type="project" value="TreeGrafter"/>
</dbReference>
<dbReference type="GO" id="GO:0071949">
    <property type="term" value="F:FAD binding"/>
    <property type="evidence" value="ECO:0007669"/>
    <property type="project" value="InterPro"/>
</dbReference>
<dbReference type="GO" id="GO:0008762">
    <property type="term" value="F:UDP-N-acetylmuramate dehydrogenase activity"/>
    <property type="evidence" value="ECO:0007669"/>
    <property type="project" value="UniProtKB-UniRule"/>
</dbReference>
<dbReference type="GO" id="GO:0051301">
    <property type="term" value="P:cell division"/>
    <property type="evidence" value="ECO:0007669"/>
    <property type="project" value="UniProtKB-KW"/>
</dbReference>
<dbReference type="GO" id="GO:0071555">
    <property type="term" value="P:cell wall organization"/>
    <property type="evidence" value="ECO:0007669"/>
    <property type="project" value="UniProtKB-KW"/>
</dbReference>
<dbReference type="GO" id="GO:0009252">
    <property type="term" value="P:peptidoglycan biosynthetic process"/>
    <property type="evidence" value="ECO:0007669"/>
    <property type="project" value="UniProtKB-UniRule"/>
</dbReference>
<dbReference type="GO" id="GO:0008360">
    <property type="term" value="P:regulation of cell shape"/>
    <property type="evidence" value="ECO:0007669"/>
    <property type="project" value="UniProtKB-KW"/>
</dbReference>
<dbReference type="FunFam" id="3.90.78.10:FF:000001">
    <property type="entry name" value="UDP-N-acetylenolpyruvoylglucosamine reductase"/>
    <property type="match status" value="1"/>
</dbReference>
<dbReference type="Gene3D" id="3.30.465.10">
    <property type="match status" value="1"/>
</dbReference>
<dbReference type="Gene3D" id="3.90.78.10">
    <property type="entry name" value="UDP-N-acetylenolpyruvoylglucosamine reductase, C-terminal domain"/>
    <property type="match status" value="1"/>
</dbReference>
<dbReference type="Gene3D" id="3.30.43.10">
    <property type="entry name" value="Uridine Diphospho-n-acetylenolpyruvylglucosamine Reductase, domain 2"/>
    <property type="match status" value="1"/>
</dbReference>
<dbReference type="HAMAP" id="MF_00037">
    <property type="entry name" value="MurB"/>
    <property type="match status" value="1"/>
</dbReference>
<dbReference type="InterPro" id="IPR016166">
    <property type="entry name" value="FAD-bd_PCMH"/>
</dbReference>
<dbReference type="InterPro" id="IPR036318">
    <property type="entry name" value="FAD-bd_PCMH-like_sf"/>
</dbReference>
<dbReference type="InterPro" id="IPR016167">
    <property type="entry name" value="FAD-bd_PCMH_sub1"/>
</dbReference>
<dbReference type="InterPro" id="IPR016169">
    <property type="entry name" value="FAD-bd_PCMH_sub2"/>
</dbReference>
<dbReference type="InterPro" id="IPR003170">
    <property type="entry name" value="MurB"/>
</dbReference>
<dbReference type="InterPro" id="IPR011601">
    <property type="entry name" value="MurB_C"/>
</dbReference>
<dbReference type="InterPro" id="IPR036635">
    <property type="entry name" value="MurB_C_sf"/>
</dbReference>
<dbReference type="InterPro" id="IPR006094">
    <property type="entry name" value="Oxid_FAD_bind_N"/>
</dbReference>
<dbReference type="NCBIfam" id="TIGR00179">
    <property type="entry name" value="murB"/>
    <property type="match status" value="1"/>
</dbReference>
<dbReference type="NCBIfam" id="NF010480">
    <property type="entry name" value="PRK13905.1"/>
    <property type="match status" value="1"/>
</dbReference>
<dbReference type="PANTHER" id="PTHR21071">
    <property type="entry name" value="UDP-N-ACETYLENOLPYRUVOYLGLUCOSAMINE REDUCTASE"/>
    <property type="match status" value="1"/>
</dbReference>
<dbReference type="PANTHER" id="PTHR21071:SF4">
    <property type="entry name" value="UDP-N-ACETYLENOLPYRUVOYLGLUCOSAMINE REDUCTASE"/>
    <property type="match status" value="1"/>
</dbReference>
<dbReference type="Pfam" id="PF01565">
    <property type="entry name" value="FAD_binding_4"/>
    <property type="match status" value="1"/>
</dbReference>
<dbReference type="Pfam" id="PF02873">
    <property type="entry name" value="MurB_C"/>
    <property type="match status" value="1"/>
</dbReference>
<dbReference type="SUPFAM" id="SSF56176">
    <property type="entry name" value="FAD-binding/transporter-associated domain-like"/>
    <property type="match status" value="1"/>
</dbReference>
<dbReference type="SUPFAM" id="SSF56194">
    <property type="entry name" value="Uridine diphospho-N-Acetylenolpyruvylglucosamine reductase, MurB, C-terminal domain"/>
    <property type="match status" value="1"/>
</dbReference>
<dbReference type="PROSITE" id="PS51387">
    <property type="entry name" value="FAD_PCMH"/>
    <property type="match status" value="1"/>
</dbReference>
<proteinExistence type="inferred from homology"/>
<gene>
    <name evidence="1" type="primary">murB</name>
    <name type="ordered locus">SAHV_0735</name>
</gene>
<comment type="function">
    <text evidence="1">Cell wall formation.</text>
</comment>
<comment type="catalytic activity">
    <reaction evidence="1">
        <text>UDP-N-acetyl-alpha-D-muramate + NADP(+) = UDP-N-acetyl-3-O-(1-carboxyvinyl)-alpha-D-glucosamine + NADPH + H(+)</text>
        <dbReference type="Rhea" id="RHEA:12248"/>
        <dbReference type="ChEBI" id="CHEBI:15378"/>
        <dbReference type="ChEBI" id="CHEBI:57783"/>
        <dbReference type="ChEBI" id="CHEBI:58349"/>
        <dbReference type="ChEBI" id="CHEBI:68483"/>
        <dbReference type="ChEBI" id="CHEBI:70757"/>
        <dbReference type="EC" id="1.3.1.98"/>
    </reaction>
</comment>
<comment type="cofactor">
    <cofactor evidence="1">
        <name>FAD</name>
        <dbReference type="ChEBI" id="CHEBI:57692"/>
    </cofactor>
</comment>
<comment type="pathway">
    <text evidence="1">Cell wall biogenesis; peptidoglycan biosynthesis.</text>
</comment>
<comment type="subcellular location">
    <subcellularLocation>
        <location evidence="1">Cytoplasm</location>
    </subcellularLocation>
</comment>
<comment type="similarity">
    <text evidence="1">Belongs to the MurB family.</text>
</comment>